<gene>
    <name type="ordered locus">At1g32430</name>
    <name type="ORF">F5D14.21</name>
</gene>
<protein>
    <recommendedName>
        <fullName>Putative F-box/kelch-repeat protein At1g32430</fullName>
    </recommendedName>
</protein>
<proteinExistence type="predicted"/>
<organism>
    <name type="scientific">Arabidopsis thaliana</name>
    <name type="common">Mouse-ear cress</name>
    <dbReference type="NCBI Taxonomy" id="3702"/>
    <lineage>
        <taxon>Eukaryota</taxon>
        <taxon>Viridiplantae</taxon>
        <taxon>Streptophyta</taxon>
        <taxon>Embryophyta</taxon>
        <taxon>Tracheophyta</taxon>
        <taxon>Spermatophyta</taxon>
        <taxon>Magnoliopsida</taxon>
        <taxon>eudicotyledons</taxon>
        <taxon>Gunneridae</taxon>
        <taxon>Pentapetalae</taxon>
        <taxon>rosids</taxon>
        <taxon>malvids</taxon>
        <taxon>Brassicales</taxon>
        <taxon>Brassicaceae</taxon>
        <taxon>Camelineae</taxon>
        <taxon>Arabidopsis</taxon>
    </lineage>
</organism>
<comment type="alternative products">
    <event type="alternative splicing"/>
    <isoform>
        <id>Q9LQL4-1</id>
        <name>1</name>
        <sequence type="displayed"/>
    </isoform>
    <isoform>
        <id>Q9LQL4-2</id>
        <name>2</name>
        <sequence type="described" ref="VSP_042263"/>
    </isoform>
</comment>
<sequence>MANKEKLPWDLEEEILSRVPPTSLDRFKTVCKRWNALFNDKTFINNHKMTFQFVLSTRSKIYSVSVNPKVEVRELTLNNPGLKAQRHKNLFATSGLLLCDVGNGAVVWNPWLKQSRCIKLEVNEPSLDFLGIGYDNNKRVEEIVYKTLSVYMKDLGSQYTWKIHDFASDTWIDQEIEKTKYSRRITEGSVTIRLTNLSVVSLNGKFFKFCDLPSGKNRRRDALALRVFREDRFSLLRQCHVTKKIKIWVTKNKIDNRYGGDVKWMSFMEVSIPTMPDLEHPKFNSQPSYFIDDKRLVICSCDETGRAWIYVVGGNKLVSKTQLDSVVDPWPLHCTYFPSLVLVPGGQREEAELQVQFQFPYLCFSYMEAKNLHVTTELYVPGKTKSSIKLHYG</sequence>
<dbReference type="EMBL" id="AC007767">
    <property type="protein sequence ID" value="AAF81341.1"/>
    <property type="molecule type" value="Genomic_DNA"/>
</dbReference>
<dbReference type="EMBL" id="CP002684">
    <property type="protein sequence ID" value="AEE31486.1"/>
    <property type="molecule type" value="Genomic_DNA"/>
</dbReference>
<dbReference type="PIR" id="E86449">
    <property type="entry name" value="E86449"/>
</dbReference>
<dbReference type="RefSeq" id="NP_174521.1">
    <molecule id="Q9LQL4-2"/>
    <property type="nucleotide sequence ID" value="NM_102978.2"/>
</dbReference>
<dbReference type="STRING" id="3702.Q9LQL4"/>
<dbReference type="PaxDb" id="3702-AT1G32430.1"/>
<dbReference type="PeptideAtlas" id="Q9LQL4"/>
<dbReference type="ProteomicsDB" id="222480">
    <molecule id="Q9LQL4-1"/>
</dbReference>
<dbReference type="EnsemblPlants" id="AT1G32430.1">
    <molecule id="Q9LQL4-2"/>
    <property type="protein sequence ID" value="AT1G32430.1"/>
    <property type="gene ID" value="AT1G32430"/>
</dbReference>
<dbReference type="GeneID" id="840137"/>
<dbReference type="Gramene" id="AT1G32430.1">
    <molecule id="Q9LQL4-2"/>
    <property type="protein sequence ID" value="AT1G32430.1"/>
    <property type="gene ID" value="AT1G32430"/>
</dbReference>
<dbReference type="KEGG" id="ath:AT1G32430"/>
<dbReference type="Araport" id="AT1G32430"/>
<dbReference type="TAIR" id="AT1G32430"/>
<dbReference type="HOGENOM" id="CLU_034692_2_1_1"/>
<dbReference type="InParanoid" id="Q9LQL4"/>
<dbReference type="OMA" id="KIDNRYG"/>
<dbReference type="PRO" id="PR:Q9LQL4"/>
<dbReference type="Proteomes" id="UP000006548">
    <property type="component" value="Chromosome 1"/>
</dbReference>
<dbReference type="ExpressionAtlas" id="Q9LQL4">
    <property type="expression patterns" value="baseline and differential"/>
</dbReference>
<dbReference type="CDD" id="cd22157">
    <property type="entry name" value="F-box_AtFBW1-like"/>
    <property type="match status" value="1"/>
</dbReference>
<dbReference type="Gene3D" id="1.20.1280.50">
    <property type="match status" value="1"/>
</dbReference>
<dbReference type="InterPro" id="IPR006527">
    <property type="entry name" value="F-box-assoc_dom_typ1"/>
</dbReference>
<dbReference type="InterPro" id="IPR017451">
    <property type="entry name" value="F-box-assoc_interact_dom"/>
</dbReference>
<dbReference type="InterPro" id="IPR036047">
    <property type="entry name" value="F-box-like_dom_sf"/>
</dbReference>
<dbReference type="InterPro" id="IPR001810">
    <property type="entry name" value="F-box_dom"/>
</dbReference>
<dbReference type="InterPro" id="IPR050796">
    <property type="entry name" value="SCF_F-box_component"/>
</dbReference>
<dbReference type="NCBIfam" id="TIGR01640">
    <property type="entry name" value="F_box_assoc_1"/>
    <property type="match status" value="1"/>
</dbReference>
<dbReference type="PANTHER" id="PTHR31672">
    <property type="entry name" value="BNACNNG10540D PROTEIN"/>
    <property type="match status" value="1"/>
</dbReference>
<dbReference type="PANTHER" id="PTHR31672:SF10">
    <property type="entry name" value="F-BOX DOMAIN-CONTAINING PROTEIN"/>
    <property type="match status" value="1"/>
</dbReference>
<dbReference type="Pfam" id="PF00646">
    <property type="entry name" value="F-box"/>
    <property type="match status" value="1"/>
</dbReference>
<dbReference type="Pfam" id="PF07734">
    <property type="entry name" value="FBA_1"/>
    <property type="match status" value="1"/>
</dbReference>
<dbReference type="SMART" id="SM00256">
    <property type="entry name" value="FBOX"/>
    <property type="match status" value="1"/>
</dbReference>
<dbReference type="SUPFAM" id="SSF81383">
    <property type="entry name" value="F-box domain"/>
    <property type="match status" value="1"/>
</dbReference>
<dbReference type="PROSITE" id="PS50181">
    <property type="entry name" value="FBOX"/>
    <property type="match status" value="1"/>
</dbReference>
<name>FBK19_ARATH</name>
<evidence type="ECO:0000255" key="1">
    <source>
        <dbReference type="PROSITE-ProRule" id="PRU00080"/>
    </source>
</evidence>
<evidence type="ECO:0000305" key="2"/>
<feature type="chain" id="PRO_0000283180" description="Putative F-box/kelch-repeat protein At1g32430">
    <location>
        <begin position="1"/>
        <end position="393"/>
    </location>
</feature>
<feature type="domain" description="F-box" evidence="1">
    <location>
        <begin position="1"/>
        <end position="47"/>
    </location>
</feature>
<feature type="repeat" description="Kelch 1">
    <location>
        <begin position="151"/>
        <end position="199"/>
    </location>
</feature>
<feature type="repeat" description="Kelch 2">
    <location>
        <begin position="308"/>
        <end position="357"/>
    </location>
</feature>
<feature type="splice variant" id="VSP_042263" description="In isoform 2." evidence="2">
    <location>
        <begin position="355"/>
        <end position="367"/>
    </location>
</feature>
<reference key="1">
    <citation type="journal article" date="2000" name="Nature">
        <title>Sequence and analysis of chromosome 1 of the plant Arabidopsis thaliana.</title>
        <authorList>
            <person name="Theologis A."/>
            <person name="Ecker J.R."/>
            <person name="Palm C.J."/>
            <person name="Federspiel N.A."/>
            <person name="Kaul S."/>
            <person name="White O."/>
            <person name="Alonso J."/>
            <person name="Altafi H."/>
            <person name="Araujo R."/>
            <person name="Bowman C.L."/>
            <person name="Brooks S.Y."/>
            <person name="Buehler E."/>
            <person name="Chan A."/>
            <person name="Chao Q."/>
            <person name="Chen H."/>
            <person name="Cheuk R.F."/>
            <person name="Chin C.W."/>
            <person name="Chung M.K."/>
            <person name="Conn L."/>
            <person name="Conway A.B."/>
            <person name="Conway A.R."/>
            <person name="Creasy T.H."/>
            <person name="Dewar K."/>
            <person name="Dunn P."/>
            <person name="Etgu P."/>
            <person name="Feldblyum T.V."/>
            <person name="Feng J.-D."/>
            <person name="Fong B."/>
            <person name="Fujii C.Y."/>
            <person name="Gill J.E."/>
            <person name="Goldsmith A.D."/>
            <person name="Haas B."/>
            <person name="Hansen N.F."/>
            <person name="Hughes B."/>
            <person name="Huizar L."/>
            <person name="Hunter J.L."/>
            <person name="Jenkins J."/>
            <person name="Johnson-Hopson C."/>
            <person name="Khan S."/>
            <person name="Khaykin E."/>
            <person name="Kim C.J."/>
            <person name="Koo H.L."/>
            <person name="Kremenetskaia I."/>
            <person name="Kurtz D.B."/>
            <person name="Kwan A."/>
            <person name="Lam B."/>
            <person name="Langin-Hooper S."/>
            <person name="Lee A."/>
            <person name="Lee J.M."/>
            <person name="Lenz C.A."/>
            <person name="Li J.H."/>
            <person name="Li Y.-P."/>
            <person name="Lin X."/>
            <person name="Liu S.X."/>
            <person name="Liu Z.A."/>
            <person name="Luros J.S."/>
            <person name="Maiti R."/>
            <person name="Marziali A."/>
            <person name="Militscher J."/>
            <person name="Miranda M."/>
            <person name="Nguyen M."/>
            <person name="Nierman W.C."/>
            <person name="Osborne B.I."/>
            <person name="Pai G."/>
            <person name="Peterson J."/>
            <person name="Pham P.K."/>
            <person name="Rizzo M."/>
            <person name="Rooney T."/>
            <person name="Rowley D."/>
            <person name="Sakano H."/>
            <person name="Salzberg S.L."/>
            <person name="Schwartz J.R."/>
            <person name="Shinn P."/>
            <person name="Southwick A.M."/>
            <person name="Sun H."/>
            <person name="Tallon L.J."/>
            <person name="Tambunga G."/>
            <person name="Toriumi M.J."/>
            <person name="Town C.D."/>
            <person name="Utterback T."/>
            <person name="Van Aken S."/>
            <person name="Vaysberg M."/>
            <person name="Vysotskaia V.S."/>
            <person name="Walker M."/>
            <person name="Wu D."/>
            <person name="Yu G."/>
            <person name="Fraser C.M."/>
            <person name="Venter J.C."/>
            <person name="Davis R.W."/>
        </authorList>
    </citation>
    <scope>NUCLEOTIDE SEQUENCE [LARGE SCALE GENOMIC DNA]</scope>
    <source>
        <strain>cv. Columbia</strain>
    </source>
</reference>
<reference key="2">
    <citation type="journal article" date="2017" name="Plant J.">
        <title>Araport11: a complete reannotation of the Arabidopsis thaliana reference genome.</title>
        <authorList>
            <person name="Cheng C.Y."/>
            <person name="Krishnakumar V."/>
            <person name="Chan A.P."/>
            <person name="Thibaud-Nissen F."/>
            <person name="Schobel S."/>
            <person name="Town C.D."/>
        </authorList>
    </citation>
    <scope>GENOME REANNOTATION</scope>
    <source>
        <strain>cv. Columbia</strain>
    </source>
</reference>
<accession>Q9LQL4</accession>
<accession>F4IE84</accession>
<keyword id="KW-0025">Alternative splicing</keyword>
<keyword id="KW-0880">Kelch repeat</keyword>
<keyword id="KW-1185">Reference proteome</keyword>
<keyword id="KW-0677">Repeat</keyword>